<sequence length="242" mass="26382">MYIIPAVDMKEGKCVQLIQGDPTKRHVEYDNPDEIAKMWIENGAEMLHLVDLDGAIDGERVNLPCVKKIIQESKVPVQMGGGIRTIQDVEELVDLGINKVIIGTVAVQNPDFVEQLAKKVGSDKIMVALDAKDGKVVIKGWKEKTEYTPVQMGKILEEKGAGSILFTNVDSEGLLNGINITPTKELVDNLNIPIIASGGVTTIEDLIEFKKIGVAGVVVGSALYKNNFKLQDAINTVNNFKI</sequence>
<keyword id="KW-0028">Amino-acid biosynthesis</keyword>
<keyword id="KW-0963">Cytoplasm</keyword>
<keyword id="KW-0368">Histidine biosynthesis</keyword>
<keyword id="KW-0413">Isomerase</keyword>
<comment type="catalytic activity">
    <reaction>
        <text>1-(5-phospho-beta-D-ribosyl)-5-[(5-phospho-beta-D-ribosylamino)methylideneamino]imidazole-4-carboxamide = 5-[(5-phospho-1-deoxy-D-ribulos-1-ylimino)methylamino]-1-(5-phospho-beta-D-ribosyl)imidazole-4-carboxamide</text>
        <dbReference type="Rhea" id="RHEA:15469"/>
        <dbReference type="ChEBI" id="CHEBI:58435"/>
        <dbReference type="ChEBI" id="CHEBI:58525"/>
        <dbReference type="EC" id="5.3.1.16"/>
    </reaction>
</comment>
<comment type="pathway">
    <text>Amino-acid biosynthesis; L-histidine biosynthesis; L-histidine from 5-phospho-alpha-D-ribose 1-diphosphate: step 4/9.</text>
</comment>
<comment type="subcellular location">
    <subcellularLocation>
        <location evidence="1">Cytoplasm</location>
    </subcellularLocation>
</comment>
<comment type="similarity">
    <text evidence="2">Belongs to the HisA/HisF family.</text>
</comment>
<evidence type="ECO:0000250" key="1"/>
<evidence type="ECO:0000305" key="2"/>
<organism>
    <name type="scientific">Methanococcus voltae</name>
    <dbReference type="NCBI Taxonomy" id="2188"/>
    <lineage>
        <taxon>Archaea</taxon>
        <taxon>Methanobacteriati</taxon>
        <taxon>Methanobacteriota</taxon>
        <taxon>Methanomada group</taxon>
        <taxon>Methanococci</taxon>
        <taxon>Methanococcales</taxon>
        <taxon>Methanococcaceae</taxon>
        <taxon>Methanococcus</taxon>
    </lineage>
</organism>
<accession>P05325</accession>
<name>HIS4_METVO</name>
<reference key="1">
    <citation type="journal article" date="1985" name="Proc. Natl. Acad. Sci. U.S.A.">
        <title>Structure and sequence divergence of two archaebacterial genes.</title>
        <authorList>
            <person name="Cue D."/>
            <person name="Beckler G.S."/>
            <person name="Reeve J.N."/>
            <person name="Konisky J."/>
        </authorList>
    </citation>
    <scope>NUCLEOTIDE SEQUENCE [GENOMIC DNA]</scope>
</reference>
<gene>
    <name type="primary">hisA</name>
</gene>
<proteinExistence type="inferred from homology"/>
<protein>
    <recommendedName>
        <fullName>1-(5-phosphoribosyl)-5-[(5-phosphoribosylamino)methylideneamino] imidazole-4-carboxamide isomerase</fullName>
        <ecNumber>5.3.1.16</ecNumber>
    </recommendedName>
    <alternativeName>
        <fullName>Phosphoribosylformimino-5-aminoimidazole carboxamide ribotide isomerase</fullName>
    </alternativeName>
</protein>
<dbReference type="EC" id="5.3.1.16"/>
<dbReference type="EMBL" id="M11218">
    <property type="protein sequence ID" value="AAA72489.1"/>
    <property type="molecule type" value="Genomic_DNA"/>
</dbReference>
<dbReference type="PIR" id="T48887">
    <property type="entry name" value="T48887"/>
</dbReference>
<dbReference type="SMR" id="P05325"/>
<dbReference type="OrthoDB" id="52866at2157"/>
<dbReference type="UniPathway" id="UPA00031">
    <property type="reaction ID" value="UER00009"/>
</dbReference>
<dbReference type="GO" id="GO:0005737">
    <property type="term" value="C:cytoplasm"/>
    <property type="evidence" value="ECO:0007669"/>
    <property type="project" value="UniProtKB-SubCell"/>
</dbReference>
<dbReference type="GO" id="GO:0003949">
    <property type="term" value="F:1-(5-phosphoribosyl)-5-[(5-phosphoribosylamino)methylideneamino]imidazole-4-carboxamide isomerase activity"/>
    <property type="evidence" value="ECO:0007669"/>
    <property type="project" value="UniProtKB-UniRule"/>
</dbReference>
<dbReference type="GO" id="GO:0000105">
    <property type="term" value="P:L-histidine biosynthetic process"/>
    <property type="evidence" value="ECO:0007669"/>
    <property type="project" value="UniProtKB-UniRule"/>
</dbReference>
<dbReference type="GO" id="GO:0000162">
    <property type="term" value="P:L-tryptophan biosynthetic process"/>
    <property type="evidence" value="ECO:0007669"/>
    <property type="project" value="TreeGrafter"/>
</dbReference>
<dbReference type="CDD" id="cd04732">
    <property type="entry name" value="HisA"/>
    <property type="match status" value="1"/>
</dbReference>
<dbReference type="FunFam" id="3.20.20.70:FF:000009">
    <property type="entry name" value="1-(5-phosphoribosyl)-5-[(5-phosphoribosylamino)methylideneamino] imidazole-4-carboxamide isomerase"/>
    <property type="match status" value="1"/>
</dbReference>
<dbReference type="Gene3D" id="3.20.20.70">
    <property type="entry name" value="Aldolase class I"/>
    <property type="match status" value="1"/>
</dbReference>
<dbReference type="HAMAP" id="MF_01014">
    <property type="entry name" value="HisA"/>
    <property type="match status" value="1"/>
</dbReference>
<dbReference type="InterPro" id="IPR013785">
    <property type="entry name" value="Aldolase_TIM"/>
</dbReference>
<dbReference type="InterPro" id="IPR006062">
    <property type="entry name" value="His_biosynth"/>
</dbReference>
<dbReference type="InterPro" id="IPR006063">
    <property type="entry name" value="HisA_bact_arch"/>
</dbReference>
<dbReference type="InterPro" id="IPR044524">
    <property type="entry name" value="Isoase_HisA-like"/>
</dbReference>
<dbReference type="InterPro" id="IPR023016">
    <property type="entry name" value="Isoase_HisA-like_bact"/>
</dbReference>
<dbReference type="InterPro" id="IPR011060">
    <property type="entry name" value="RibuloseP-bd_barrel"/>
</dbReference>
<dbReference type="NCBIfam" id="TIGR00007">
    <property type="entry name" value="1-(5-phosphoribosyl)-5-[(5-phosphoribosylamino)methylideneamino]imidazole-4-carboxamide isomerase"/>
    <property type="match status" value="1"/>
</dbReference>
<dbReference type="NCBIfam" id="NF010112">
    <property type="entry name" value="PRK13585.1"/>
    <property type="match status" value="1"/>
</dbReference>
<dbReference type="PANTHER" id="PTHR43090">
    <property type="entry name" value="1-(5-PHOSPHORIBOSYL)-5-[(5-PHOSPHORIBOSYLAMINO)METHYLIDENEAMINO] IMIDAZOLE-4-CARBOXAMIDE ISOMERASE"/>
    <property type="match status" value="1"/>
</dbReference>
<dbReference type="PANTHER" id="PTHR43090:SF7">
    <property type="entry name" value="1-(5-PHOSPHORIBOSYL)-5-[(5-PHOSPHORIBOSYLAMINO)METHYLIDENEAMINO] IMIDAZOLE-4-CARBOXAMIDE ISOMERASE"/>
    <property type="match status" value="1"/>
</dbReference>
<dbReference type="Pfam" id="PF00977">
    <property type="entry name" value="His_biosynth"/>
    <property type="match status" value="1"/>
</dbReference>
<dbReference type="SUPFAM" id="SSF51366">
    <property type="entry name" value="Ribulose-phoshate binding barrel"/>
    <property type="match status" value="1"/>
</dbReference>
<feature type="chain" id="PRO_0000142099" description="1-(5-phosphoribosyl)-5-[(5-phosphoribosylamino)methylideneamino] imidazole-4-carboxamide isomerase">
    <location>
        <begin position="1"/>
        <end position="242"/>
    </location>
</feature>
<feature type="active site" description="Proton acceptor" evidence="1">
    <location>
        <position position="8"/>
    </location>
</feature>
<feature type="active site" description="Proton donor" evidence="1">
    <location>
        <position position="130"/>
    </location>
</feature>